<keyword id="KW-0025">Alternative splicing</keyword>
<keyword id="KW-0479">Metal-binding</keyword>
<keyword id="KW-1185">Reference proteome</keyword>
<keyword id="KW-0808">Transferase</keyword>
<keyword id="KW-0862">Zinc</keyword>
<keyword id="KW-0863">Zinc-finger</keyword>
<feature type="chain" id="PRO_0000455718" description="Histone-lysine N-methyltransferase set-18">
    <location>
        <begin position="1"/>
        <end position="507"/>
    </location>
</feature>
<feature type="zinc finger region" description="MYND-type" evidence="1">
    <location>
        <begin position="49"/>
        <end position="90"/>
    </location>
</feature>
<feature type="binding site" evidence="1">
    <location>
        <position position="49"/>
    </location>
    <ligand>
        <name>Zn(2+)</name>
        <dbReference type="ChEBI" id="CHEBI:29105"/>
        <label>1</label>
    </ligand>
</feature>
<feature type="binding site" evidence="1">
    <location>
        <position position="52"/>
    </location>
    <ligand>
        <name>Zn(2+)</name>
        <dbReference type="ChEBI" id="CHEBI:29105"/>
        <label>1</label>
    </ligand>
</feature>
<feature type="binding site" evidence="1">
    <location>
        <position position="65"/>
    </location>
    <ligand>
        <name>Zn(2+)</name>
        <dbReference type="ChEBI" id="CHEBI:29105"/>
        <label>2</label>
    </ligand>
</feature>
<feature type="binding site" evidence="1">
    <location>
        <position position="68"/>
    </location>
    <ligand>
        <name>Zn(2+)</name>
        <dbReference type="ChEBI" id="CHEBI:29105"/>
        <label>2</label>
    </ligand>
</feature>
<feature type="binding site" evidence="1">
    <location>
        <position position="74"/>
    </location>
    <ligand>
        <name>Zn(2+)</name>
        <dbReference type="ChEBI" id="CHEBI:29105"/>
        <label>1</label>
    </ligand>
</feature>
<feature type="binding site" evidence="1">
    <location>
        <position position="78"/>
    </location>
    <ligand>
        <name>Zn(2+)</name>
        <dbReference type="ChEBI" id="CHEBI:29105"/>
        <label>1</label>
    </ligand>
</feature>
<feature type="binding site" evidence="1">
    <location>
        <position position="86"/>
    </location>
    <ligand>
        <name>Zn(2+)</name>
        <dbReference type="ChEBI" id="CHEBI:29105"/>
        <label>2</label>
    </ligand>
</feature>
<feature type="binding site" evidence="1">
    <location>
        <position position="90"/>
    </location>
    <ligand>
        <name>Zn(2+)</name>
        <dbReference type="ChEBI" id="CHEBI:29105"/>
        <label>2</label>
    </ligand>
</feature>
<feature type="splice variant" id="VSP_061521" description="In isoform a." evidence="4">
    <location>
        <begin position="342"/>
        <end position="347"/>
    </location>
</feature>
<feature type="mutagenesis site" description="Decreased dimethylation of 'Lys-36' of histone H3." evidence="2">
    <original>Y</original>
    <variation>F</variation>
    <location>
        <position position="245"/>
    </location>
</feature>
<feature type="mutagenesis site" description="Decreased dimethylation of 'Lys-36' of histone H3." evidence="2">
    <original>D</original>
    <variation>A</variation>
    <location>
        <position position="247"/>
    </location>
</feature>
<protein>
    <recommendedName>
        <fullName evidence="3">Histone-lysine N-methyltransferase set-18</fullName>
        <ecNumber evidence="2">2.1.1.357</ecNumber>
    </recommendedName>
</protein>
<proteinExistence type="evidence at protein level"/>
<organism evidence="5">
    <name type="scientific">Caenorhabditis elegans</name>
    <dbReference type="NCBI Taxonomy" id="6239"/>
    <lineage>
        <taxon>Eukaryota</taxon>
        <taxon>Metazoa</taxon>
        <taxon>Ecdysozoa</taxon>
        <taxon>Nematoda</taxon>
        <taxon>Chromadorea</taxon>
        <taxon>Rhabditida</taxon>
        <taxon>Rhabditina</taxon>
        <taxon>Rhabditomorpha</taxon>
        <taxon>Rhabditoidea</taxon>
        <taxon>Rhabditidae</taxon>
        <taxon>Peloderinae</taxon>
        <taxon>Caenorhabditis</taxon>
    </lineage>
</organism>
<accession>Q8I4F7</accession>
<accession>P91821</accession>
<evidence type="ECO:0000255" key="1">
    <source>
        <dbReference type="PROSITE-ProRule" id="PRU00134"/>
    </source>
</evidence>
<evidence type="ECO:0000269" key="2">
    <source>
    </source>
</evidence>
<evidence type="ECO:0000303" key="3">
    <source>
    </source>
</evidence>
<evidence type="ECO:0000305" key="4"/>
<evidence type="ECO:0000312" key="5">
    <source>
        <dbReference type="Proteomes" id="UP000001940"/>
    </source>
</evidence>
<evidence type="ECO:0000312" key="6">
    <source>
        <dbReference type="WormBase" id="T22A3.4a"/>
    </source>
</evidence>
<evidence type="ECO:0000312" key="7">
    <source>
        <dbReference type="WormBase" id="T22A3.4b"/>
    </source>
</evidence>
<sequence length="507" mass="57399">MAVKKNKNVPKQEDPLVQKDEISSIHARIKIFETPFATQVLNPKVSEFCANCLRGPAPGEKLLRCGGCNFSMYCSKECQATAWLVHKPECKRLKASFPNLPLTEVLFLSKVIDRIQFLEKNGDKLGIEAERKFSSLVDHKVDIRDDEEKMAHFEKIFEKMGAFRGEEMIEKGEFFDVFCKATINSHSIHTNAGNEVGMALDLGVSKYNHSCRPTCSMVFDGYRVCLRPLVPGVDAENTEEAFISYIDVGRSKYIRRRDLNSRWYFNCECTRCMDPEDDALTAIRCANPACDAPILTSETEEPMNIACEKCKTIVEEDTVKAAQEYMKTLPASFDPKCPAEIEALPGKLKELLAKAEQILHPSNVYVARLRTALFHVTGTLTMDNLSSMHTQIYNNYKMCFPKADRHVGFQLLHIVKALIEKDERDEAMPYAFDAMNIFEVCFGLDHPYYLQTLALWTYLEKKIPKSTEELVQLTNFSDNRPIDIVSLLKRANMLPPPPYAAGTPGVA</sequence>
<name>SMYDL_CAEEL</name>
<comment type="function">
    <text evidence="2">Histone methyltransferase (PubMed:29514099). Specifically methylates 'Lys-36' of histone H3, inducing di-methylation (PubMed:29514099). Plays a role in modulating lifespan and oxidative stress resistance, in a manner dependent upon daf-16/Forkhead box protein O and the Insulin/IGF-1-like signaling (IIS) mediated pathway (PubMed:29514099). Represses transcription of daf-16 isoform a, perhaps by methylating histone H3 at the daf-16 promoter, which in turn leads to recruitment of histone deacetylases and thus modulation of expression (PubMed:29514099).</text>
</comment>
<comment type="catalytic activity">
    <molecule>Histone-lysine N-methyltransferase set-18</molecule>
    <reaction evidence="2">
        <text>L-lysyl(36)-[histone H3] + 2 S-adenosyl-L-methionine = N(6),N(6)-dimethyl-L-lysyl(36)-[histone H3] + 2 S-adenosyl-L-homocysteine + 2 H(+)</text>
        <dbReference type="Rhea" id="RHEA:60308"/>
        <dbReference type="Rhea" id="RHEA-COMP:9785"/>
        <dbReference type="Rhea" id="RHEA-COMP:9787"/>
        <dbReference type="ChEBI" id="CHEBI:15378"/>
        <dbReference type="ChEBI" id="CHEBI:29969"/>
        <dbReference type="ChEBI" id="CHEBI:57856"/>
        <dbReference type="ChEBI" id="CHEBI:59789"/>
        <dbReference type="ChEBI" id="CHEBI:61976"/>
        <dbReference type="EC" id="2.1.1.357"/>
    </reaction>
</comment>
<comment type="alternative products">
    <event type="alternative splicing"/>
    <isoform>
        <id>Q8I4F7-1</id>
        <name evidence="7">b</name>
        <sequence type="displayed"/>
    </isoform>
    <isoform>
        <id>Q8I4F7-2</id>
        <name evidence="6">a</name>
        <sequence type="described" ref="VSP_061521"/>
    </isoform>
</comment>
<comment type="tissue specificity">
    <text evidence="2">Expressed in pharyngeal and body wall muscles.</text>
</comment>
<comment type="developmental stage">
    <text evidence="2">Muscle-specific expression increases in adults between day 3 and day 11.</text>
</comment>
<comment type="disruption phenotype">
    <text evidence="2">RNAi-mediated knockdown causes lifespan extension.</text>
</comment>
<comment type="similarity">
    <text evidence="4">Belongs to the class V-like SAM-binding methyltransferase superfamily. Histone-lysine methyltransferase family.</text>
</comment>
<dbReference type="EC" id="2.1.1.357" evidence="2"/>
<dbReference type="EMBL" id="BX284601">
    <property type="protein sequence ID" value="CAB03382.1"/>
    <property type="molecule type" value="Genomic_DNA"/>
</dbReference>
<dbReference type="EMBL" id="BX284601">
    <property type="protein sequence ID" value="CAD56600.1"/>
    <property type="molecule type" value="Genomic_DNA"/>
</dbReference>
<dbReference type="PIR" id="T25093">
    <property type="entry name" value="T25093"/>
</dbReference>
<dbReference type="RefSeq" id="NP_492772.1">
    <molecule id="Q8I4F7-2"/>
    <property type="nucleotide sequence ID" value="NM_060371.5"/>
</dbReference>
<dbReference type="RefSeq" id="NP_871849.1">
    <molecule id="Q8I4F7-1"/>
    <property type="nucleotide sequence ID" value="NM_182049.7"/>
</dbReference>
<dbReference type="SMR" id="Q8I4F7"/>
<dbReference type="DIP" id="DIP-24441N"/>
<dbReference type="FunCoup" id="Q8I4F7">
    <property type="interactions" value="372"/>
</dbReference>
<dbReference type="IntAct" id="Q8I4F7">
    <property type="interactions" value="4"/>
</dbReference>
<dbReference type="STRING" id="6239.T22A3.4b.1"/>
<dbReference type="PaxDb" id="6239-T22A3.4b"/>
<dbReference type="PeptideAtlas" id="Q8I4F7"/>
<dbReference type="EnsemblMetazoa" id="T22A3.4a.1">
    <molecule id="Q8I4F7-2"/>
    <property type="protein sequence ID" value="T22A3.4a.1"/>
    <property type="gene ID" value="WBGene00044070"/>
</dbReference>
<dbReference type="EnsemblMetazoa" id="T22A3.4b.1">
    <molecule id="Q8I4F7-1"/>
    <property type="protein sequence ID" value="T22A3.4b.1"/>
    <property type="gene ID" value="WBGene00044070"/>
</dbReference>
<dbReference type="GeneID" id="172949"/>
<dbReference type="KEGG" id="cel:CELE_T22A3.4"/>
<dbReference type="UCSC" id="T22A3.4b">
    <property type="organism name" value="c. elegans"/>
</dbReference>
<dbReference type="AGR" id="WB:WBGene00044070"/>
<dbReference type="CTD" id="172949"/>
<dbReference type="WormBase" id="T22A3.4a">
    <molecule id="Q8I4F7-2"/>
    <property type="protein sequence ID" value="CE13918"/>
    <property type="gene ID" value="WBGene00044070"/>
    <property type="gene designation" value="set-18"/>
</dbReference>
<dbReference type="WormBase" id="T22A3.4b">
    <molecule id="Q8I4F7-1"/>
    <property type="protein sequence ID" value="CE32497"/>
    <property type="gene ID" value="WBGene00044070"/>
    <property type="gene designation" value="set-18"/>
</dbReference>
<dbReference type="eggNOG" id="KOG2084">
    <property type="taxonomic scope" value="Eukaryota"/>
</dbReference>
<dbReference type="GeneTree" id="ENSGT00940000167335"/>
<dbReference type="HOGENOM" id="CLU_018406_6_0_1"/>
<dbReference type="InParanoid" id="Q8I4F7"/>
<dbReference type="OMA" id="KWYFDCQ"/>
<dbReference type="OrthoDB" id="265717at2759"/>
<dbReference type="PhylomeDB" id="Q8I4F7"/>
<dbReference type="Reactome" id="R-CEL-3214841">
    <property type="pathway name" value="PKMTs methylate histone lysines"/>
</dbReference>
<dbReference type="PRO" id="PR:Q8I4F7"/>
<dbReference type="Proteomes" id="UP000001940">
    <property type="component" value="Chromosome I"/>
</dbReference>
<dbReference type="Bgee" id="WBGene00044070">
    <property type="expression patterns" value="Expressed in pharyngeal muscle cell (C elegans) and 3 other cell types or tissues"/>
</dbReference>
<dbReference type="ExpressionAtlas" id="Q8I4F7">
    <property type="expression patterns" value="baseline and differential"/>
</dbReference>
<dbReference type="GO" id="GO:0005783">
    <property type="term" value="C:endoplasmic reticulum"/>
    <property type="evidence" value="ECO:0007005"/>
    <property type="project" value="WormBase"/>
</dbReference>
<dbReference type="GO" id="GO:0005634">
    <property type="term" value="C:nucleus"/>
    <property type="evidence" value="ECO:0000318"/>
    <property type="project" value="GO_Central"/>
</dbReference>
<dbReference type="GO" id="GO:0030017">
    <property type="term" value="C:sarcomere"/>
    <property type="evidence" value="ECO:0007005"/>
    <property type="project" value="WormBase"/>
</dbReference>
<dbReference type="GO" id="GO:0055120">
    <property type="term" value="C:striated muscle dense body"/>
    <property type="evidence" value="ECO:0007005"/>
    <property type="project" value="WormBase"/>
</dbReference>
<dbReference type="GO" id="GO:0046975">
    <property type="term" value="F:histone H3K36 methyltransferase activity"/>
    <property type="evidence" value="ECO:0000314"/>
    <property type="project" value="WormBase"/>
</dbReference>
<dbReference type="GO" id="GO:0008270">
    <property type="term" value="F:zinc ion binding"/>
    <property type="evidence" value="ECO:0007669"/>
    <property type="project" value="UniProtKB-KW"/>
</dbReference>
<dbReference type="FunFam" id="1.25.40.10:FF:002067">
    <property type="entry name" value="SET (Trithorax/polycomb) domain containing"/>
    <property type="match status" value="1"/>
</dbReference>
<dbReference type="FunFam" id="2.170.270.10:FF:000080">
    <property type="entry name" value="SET (Trithorax/polycomb) domain containing"/>
    <property type="match status" value="1"/>
</dbReference>
<dbReference type="Gene3D" id="6.10.140.2220">
    <property type="match status" value="1"/>
</dbReference>
<dbReference type="Gene3D" id="2.170.270.10">
    <property type="entry name" value="SET domain"/>
    <property type="match status" value="1"/>
</dbReference>
<dbReference type="Gene3D" id="1.25.40.10">
    <property type="entry name" value="Tetratricopeptide repeat domain"/>
    <property type="match status" value="1"/>
</dbReference>
<dbReference type="InterPro" id="IPR050869">
    <property type="entry name" value="H3K4_H4K5_MeTrfase"/>
</dbReference>
<dbReference type="InterPro" id="IPR046341">
    <property type="entry name" value="SET_dom_sf"/>
</dbReference>
<dbReference type="InterPro" id="IPR011990">
    <property type="entry name" value="TPR-like_helical_dom_sf"/>
</dbReference>
<dbReference type="InterPro" id="IPR002893">
    <property type="entry name" value="Znf_MYND"/>
</dbReference>
<dbReference type="PANTHER" id="PTHR12197:SF300">
    <property type="entry name" value="HISTONE-LYSINE N-METHYLTRANSFERASE SET-18"/>
    <property type="match status" value="1"/>
</dbReference>
<dbReference type="PANTHER" id="PTHR12197">
    <property type="entry name" value="HISTONE-LYSINE N-METHYLTRANSFERASE SMYD"/>
    <property type="match status" value="1"/>
</dbReference>
<dbReference type="Pfam" id="PF01753">
    <property type="entry name" value="zf-MYND"/>
    <property type="match status" value="1"/>
</dbReference>
<dbReference type="SUPFAM" id="SSF144232">
    <property type="entry name" value="HIT/MYND zinc finger-like"/>
    <property type="match status" value="1"/>
</dbReference>
<dbReference type="SUPFAM" id="SSF82199">
    <property type="entry name" value="SET domain"/>
    <property type="match status" value="1"/>
</dbReference>
<dbReference type="PROSITE" id="PS01360">
    <property type="entry name" value="ZF_MYND_1"/>
    <property type="match status" value="1"/>
</dbReference>
<dbReference type="PROSITE" id="PS50865">
    <property type="entry name" value="ZF_MYND_2"/>
    <property type="match status" value="1"/>
</dbReference>
<reference evidence="5" key="1">
    <citation type="journal article" date="1998" name="Science">
        <title>Genome sequence of the nematode C. elegans: a platform for investigating biology.</title>
        <authorList>
            <consortium name="The C. elegans sequencing consortium"/>
        </authorList>
    </citation>
    <scope>NUCLEOTIDE SEQUENCE [LARGE SCALE GENOMIC DNA]</scope>
    <source>
        <strain evidence="5">Bristol N2</strain>
    </source>
</reference>
<reference evidence="4" key="2">
    <citation type="journal article" date="2018" name="Cell Rep.">
        <title>Muscle-Specific Histone H3K36 Dimethyltransferase SET-18 Shortens Lifespan of Caenorhabditis elegans by Repressing daf-16a Expression.</title>
        <authorList>
            <person name="Su L."/>
            <person name="Li H."/>
            <person name="Huang C."/>
            <person name="Zhao T."/>
            <person name="Zhang Y."/>
            <person name="Ba X."/>
            <person name="Li Z."/>
            <person name="Zhang Y."/>
            <person name="Huang B."/>
            <person name="Lu J."/>
            <person name="Zhao Y."/>
            <person name="Li X."/>
        </authorList>
    </citation>
    <scope>FUNCTION</scope>
    <scope>CATALYTIC ACTIVITY</scope>
    <scope>TISSUE SPECIFICITY</scope>
    <scope>DEVELOPMENTAL STAGE</scope>
    <scope>DISRUPTION PHENOTYPE</scope>
    <scope>MUTAGENESIS OF TYR-245 AND ASP-247</scope>
</reference>
<gene>
    <name evidence="7" type="primary">set-18</name>
    <name evidence="7" type="ORF">T22A3.4</name>
</gene>